<evidence type="ECO:0000255" key="1">
    <source>
        <dbReference type="HAMAP-Rule" id="MF_00335"/>
    </source>
</evidence>
<evidence type="ECO:0000255" key="2">
    <source>
        <dbReference type="PROSITE-ProRule" id="PRU01175"/>
    </source>
</evidence>
<accession>Q9ZL83</accession>
<protein>
    <recommendedName>
        <fullName evidence="1">Ribonuclease Y</fullName>
        <shortName evidence="1">RNase Y</shortName>
        <ecNumber evidence="1">3.1.-.-</ecNumber>
    </recommendedName>
</protein>
<dbReference type="EC" id="3.1.-.-" evidence="1"/>
<dbReference type="EMBL" id="AE001439">
    <property type="protein sequence ID" value="AAD06283.1"/>
    <property type="molecule type" value="Genomic_DNA"/>
</dbReference>
<dbReference type="PIR" id="A71899">
    <property type="entry name" value="A71899"/>
</dbReference>
<dbReference type="SMR" id="Q9ZL83"/>
<dbReference type="KEGG" id="hpj:jhp_0697"/>
<dbReference type="eggNOG" id="COG1418">
    <property type="taxonomic scope" value="Bacteria"/>
</dbReference>
<dbReference type="Proteomes" id="UP000000804">
    <property type="component" value="Chromosome"/>
</dbReference>
<dbReference type="GO" id="GO:0005886">
    <property type="term" value="C:plasma membrane"/>
    <property type="evidence" value="ECO:0007669"/>
    <property type="project" value="UniProtKB-SubCell"/>
</dbReference>
<dbReference type="GO" id="GO:0003723">
    <property type="term" value="F:RNA binding"/>
    <property type="evidence" value="ECO:0007669"/>
    <property type="project" value="UniProtKB-UniRule"/>
</dbReference>
<dbReference type="GO" id="GO:0004521">
    <property type="term" value="F:RNA endonuclease activity"/>
    <property type="evidence" value="ECO:0007669"/>
    <property type="project" value="UniProtKB-UniRule"/>
</dbReference>
<dbReference type="GO" id="GO:0006402">
    <property type="term" value="P:mRNA catabolic process"/>
    <property type="evidence" value="ECO:0007669"/>
    <property type="project" value="UniProtKB-UniRule"/>
</dbReference>
<dbReference type="CDD" id="cd00077">
    <property type="entry name" value="HDc"/>
    <property type="match status" value="1"/>
</dbReference>
<dbReference type="CDD" id="cd22431">
    <property type="entry name" value="KH-I_RNaseY"/>
    <property type="match status" value="1"/>
</dbReference>
<dbReference type="FunFam" id="1.10.3210.10:FF:000013">
    <property type="entry name" value="Ribonuclease Y"/>
    <property type="match status" value="1"/>
</dbReference>
<dbReference type="FunFam" id="3.30.310.210:FF:000007">
    <property type="entry name" value="Ribonuclease Y"/>
    <property type="match status" value="1"/>
</dbReference>
<dbReference type="Gene3D" id="1.10.3210.10">
    <property type="entry name" value="Hypothetical protein af1432"/>
    <property type="match status" value="1"/>
</dbReference>
<dbReference type="Gene3D" id="3.30.1370.10">
    <property type="entry name" value="K Homology domain, type 1"/>
    <property type="match status" value="1"/>
</dbReference>
<dbReference type="HAMAP" id="MF_00335">
    <property type="entry name" value="RNase_Y"/>
    <property type="match status" value="1"/>
</dbReference>
<dbReference type="InterPro" id="IPR003607">
    <property type="entry name" value="HD/PDEase_dom"/>
</dbReference>
<dbReference type="InterPro" id="IPR006674">
    <property type="entry name" value="HD_domain"/>
</dbReference>
<dbReference type="InterPro" id="IPR006675">
    <property type="entry name" value="HDIG_dom"/>
</dbReference>
<dbReference type="InterPro" id="IPR004087">
    <property type="entry name" value="KH_dom"/>
</dbReference>
<dbReference type="InterPro" id="IPR004088">
    <property type="entry name" value="KH_dom_type_1"/>
</dbReference>
<dbReference type="InterPro" id="IPR036612">
    <property type="entry name" value="KH_dom_type_1_sf"/>
</dbReference>
<dbReference type="InterPro" id="IPR017705">
    <property type="entry name" value="Ribonuclease_Y"/>
</dbReference>
<dbReference type="InterPro" id="IPR022711">
    <property type="entry name" value="RNase_Y_N"/>
</dbReference>
<dbReference type="NCBIfam" id="TIGR00277">
    <property type="entry name" value="HDIG"/>
    <property type="match status" value="1"/>
</dbReference>
<dbReference type="NCBIfam" id="TIGR03319">
    <property type="entry name" value="RNase_Y"/>
    <property type="match status" value="1"/>
</dbReference>
<dbReference type="PANTHER" id="PTHR12826">
    <property type="entry name" value="RIBONUCLEASE Y"/>
    <property type="match status" value="1"/>
</dbReference>
<dbReference type="PANTHER" id="PTHR12826:SF15">
    <property type="entry name" value="RIBONUCLEASE Y"/>
    <property type="match status" value="1"/>
</dbReference>
<dbReference type="Pfam" id="PF01966">
    <property type="entry name" value="HD"/>
    <property type="match status" value="1"/>
</dbReference>
<dbReference type="Pfam" id="PF00013">
    <property type="entry name" value="KH_1"/>
    <property type="match status" value="1"/>
</dbReference>
<dbReference type="Pfam" id="PF12072">
    <property type="entry name" value="RNase_Y_N"/>
    <property type="match status" value="1"/>
</dbReference>
<dbReference type="SMART" id="SM00471">
    <property type="entry name" value="HDc"/>
    <property type="match status" value="1"/>
</dbReference>
<dbReference type="SMART" id="SM00322">
    <property type="entry name" value="KH"/>
    <property type="match status" value="1"/>
</dbReference>
<dbReference type="SUPFAM" id="SSF54791">
    <property type="entry name" value="Eukaryotic type KH-domain (KH-domain type I)"/>
    <property type="match status" value="1"/>
</dbReference>
<dbReference type="SUPFAM" id="SSF109604">
    <property type="entry name" value="HD-domain/PDEase-like"/>
    <property type="match status" value="1"/>
</dbReference>
<dbReference type="PROSITE" id="PS51831">
    <property type="entry name" value="HD"/>
    <property type="match status" value="1"/>
</dbReference>
<dbReference type="PROSITE" id="PS50084">
    <property type="entry name" value="KH_TYPE_1"/>
    <property type="match status" value="1"/>
</dbReference>
<sequence length="529" mass="60398">MSSGLIYISLEVLVACLITALIMYYVMKKIYYARGQAILKGASAKAKLMEFQAKSFVEAEEMRMKSQECKLQQQYENKNLQLQTHFDKKEAHLKHLEAQHKEFVRDEKRYLEKEKKELEKERQILEQERENFKKQRAICKEAQAKALDAMLNYMAYTKDEIKSMILEQLEEELEAQKSALIRRYEKEAKEEGKKKSYAILAEATARFAGDYATENLTSRIALPCSDYVGRVIGKDGKNIEAFKKISGVDIEFSEDSSELCLSSFNIYRREVASETIKILIEDGRIQPNRIEEVYHRVARNMEKELLSEGESVVLELELGTMEDELKILIGKMRYRFSFGQNALQHSKEVALLAGLIAEQLGGDKKLARRAGILHDIGKALTQELGRDHVNLGVEVCKRHKEDPVVINAIYAHHGHEEIMSVECASVCAADALSAGRPGARRKSDEEYAKRMQALEEIALEFDGVEKAYAMESGRELRVIVKSNQVRDNQVPIIARKIAKRIEESTQYVGEVGVQVVRENRFKTTATLKQ</sequence>
<reference key="1">
    <citation type="journal article" date="1999" name="Nature">
        <title>Genomic sequence comparison of two unrelated isolates of the human gastric pathogen Helicobacter pylori.</title>
        <authorList>
            <person name="Alm R.A."/>
            <person name="Ling L.-S.L."/>
            <person name="Moir D.T."/>
            <person name="King B.L."/>
            <person name="Brown E.D."/>
            <person name="Doig P.C."/>
            <person name="Smith D.R."/>
            <person name="Noonan B."/>
            <person name="Guild B.C."/>
            <person name="deJonge B.L."/>
            <person name="Carmel G."/>
            <person name="Tummino P.J."/>
            <person name="Caruso A."/>
            <person name="Uria-Nickelsen M."/>
            <person name="Mills D.M."/>
            <person name="Ives C."/>
            <person name="Gibson R."/>
            <person name="Merberg D."/>
            <person name="Mills S.D."/>
            <person name="Jiang Q."/>
            <person name="Taylor D.E."/>
            <person name="Vovis G.F."/>
            <person name="Trust T.J."/>
        </authorList>
    </citation>
    <scope>NUCLEOTIDE SEQUENCE [LARGE SCALE GENOMIC DNA]</scope>
    <source>
        <strain>J99 / ATCC 700824</strain>
    </source>
</reference>
<comment type="function">
    <text evidence="1">Endoribonuclease that initiates mRNA decay.</text>
</comment>
<comment type="subcellular location">
    <subcellularLocation>
        <location evidence="1">Cell membrane</location>
        <topology evidence="1">Single-pass membrane protein</topology>
    </subcellularLocation>
</comment>
<comment type="similarity">
    <text evidence="1">Belongs to the RNase Y family.</text>
</comment>
<keyword id="KW-1003">Cell membrane</keyword>
<keyword id="KW-0255">Endonuclease</keyword>
<keyword id="KW-0378">Hydrolase</keyword>
<keyword id="KW-0472">Membrane</keyword>
<keyword id="KW-0540">Nuclease</keyword>
<keyword id="KW-0694">RNA-binding</keyword>
<keyword id="KW-0812">Transmembrane</keyword>
<keyword id="KW-1133">Transmembrane helix</keyword>
<feature type="chain" id="PRO_0000163775" description="Ribonuclease Y">
    <location>
        <begin position="1"/>
        <end position="529"/>
    </location>
</feature>
<feature type="transmembrane region" description="Helical" evidence="1">
    <location>
        <begin position="4"/>
        <end position="24"/>
    </location>
</feature>
<feature type="domain" description="KH" evidence="1">
    <location>
        <begin position="216"/>
        <end position="297"/>
    </location>
</feature>
<feature type="domain" description="HD" evidence="2">
    <location>
        <begin position="342"/>
        <end position="435"/>
    </location>
</feature>
<gene>
    <name evidence="1" type="primary">rny</name>
    <name type="ordered locus">jhp_0697</name>
</gene>
<proteinExistence type="inferred from homology"/>
<name>RNY_HELPJ</name>
<organism>
    <name type="scientific">Helicobacter pylori (strain J99 / ATCC 700824)</name>
    <name type="common">Campylobacter pylori J99</name>
    <dbReference type="NCBI Taxonomy" id="85963"/>
    <lineage>
        <taxon>Bacteria</taxon>
        <taxon>Pseudomonadati</taxon>
        <taxon>Campylobacterota</taxon>
        <taxon>Epsilonproteobacteria</taxon>
        <taxon>Campylobacterales</taxon>
        <taxon>Helicobacteraceae</taxon>
        <taxon>Helicobacter</taxon>
    </lineage>
</organism>